<protein>
    <recommendedName>
        <fullName evidence="1">Formate-dependent phosphoribosylglycinamide formyltransferase</fullName>
        <ecNumber evidence="1">6.3.1.21</ecNumber>
    </recommendedName>
    <alternativeName>
        <fullName evidence="1">5'-phosphoribosylglycinamide transformylase 2</fullName>
    </alternativeName>
    <alternativeName>
        <fullName evidence="1">Formate-dependent GAR transformylase</fullName>
    </alternativeName>
    <alternativeName>
        <fullName evidence="1">GAR transformylase 2</fullName>
        <shortName evidence="1">GART 2</shortName>
    </alternativeName>
    <alternativeName>
        <fullName evidence="1">Non-folate glycinamide ribonucleotide transformylase</fullName>
    </alternativeName>
    <alternativeName>
        <fullName evidence="1">Phosphoribosylglycinamide formyltransferase 2</fullName>
    </alternativeName>
</protein>
<gene>
    <name evidence="1" type="primary">purT</name>
    <name type="ordered locus">SBO_1157</name>
</gene>
<keyword id="KW-0067">ATP-binding</keyword>
<keyword id="KW-0436">Ligase</keyword>
<keyword id="KW-0460">Magnesium</keyword>
<keyword id="KW-0479">Metal-binding</keyword>
<keyword id="KW-0547">Nucleotide-binding</keyword>
<keyword id="KW-0658">Purine biosynthesis</keyword>
<dbReference type="EC" id="6.3.1.21" evidence="1"/>
<dbReference type="EMBL" id="CP000036">
    <property type="protein sequence ID" value="ABB65792.1"/>
    <property type="molecule type" value="Genomic_DNA"/>
</dbReference>
<dbReference type="RefSeq" id="WP_000173497.1">
    <property type="nucleotide sequence ID" value="NC_007613.1"/>
</dbReference>
<dbReference type="SMR" id="Q322G6"/>
<dbReference type="KEGG" id="sbo:SBO_1157"/>
<dbReference type="HOGENOM" id="CLU_011534_1_3_6"/>
<dbReference type="UniPathway" id="UPA00074">
    <property type="reaction ID" value="UER00127"/>
</dbReference>
<dbReference type="Proteomes" id="UP000007067">
    <property type="component" value="Chromosome"/>
</dbReference>
<dbReference type="GO" id="GO:0005829">
    <property type="term" value="C:cytosol"/>
    <property type="evidence" value="ECO:0007669"/>
    <property type="project" value="TreeGrafter"/>
</dbReference>
<dbReference type="GO" id="GO:0005524">
    <property type="term" value="F:ATP binding"/>
    <property type="evidence" value="ECO:0007669"/>
    <property type="project" value="UniProtKB-UniRule"/>
</dbReference>
<dbReference type="GO" id="GO:0000287">
    <property type="term" value="F:magnesium ion binding"/>
    <property type="evidence" value="ECO:0007669"/>
    <property type="project" value="InterPro"/>
</dbReference>
<dbReference type="GO" id="GO:0043815">
    <property type="term" value="F:phosphoribosylglycinamide formyltransferase 2 activity"/>
    <property type="evidence" value="ECO:0007669"/>
    <property type="project" value="UniProtKB-UniRule"/>
</dbReference>
<dbReference type="GO" id="GO:0004644">
    <property type="term" value="F:phosphoribosylglycinamide formyltransferase activity"/>
    <property type="evidence" value="ECO:0007669"/>
    <property type="project" value="InterPro"/>
</dbReference>
<dbReference type="GO" id="GO:0006189">
    <property type="term" value="P:'de novo' IMP biosynthetic process"/>
    <property type="evidence" value="ECO:0007669"/>
    <property type="project" value="UniProtKB-UniRule"/>
</dbReference>
<dbReference type="FunFam" id="3.30.1490.20:FF:000013">
    <property type="entry name" value="Formate-dependent phosphoribosylglycinamide formyltransferase"/>
    <property type="match status" value="1"/>
</dbReference>
<dbReference type="FunFam" id="3.30.470.20:FF:000027">
    <property type="entry name" value="Formate-dependent phosphoribosylglycinamide formyltransferase"/>
    <property type="match status" value="1"/>
</dbReference>
<dbReference type="FunFam" id="3.40.50.20:FF:000007">
    <property type="entry name" value="Formate-dependent phosphoribosylglycinamide formyltransferase"/>
    <property type="match status" value="1"/>
</dbReference>
<dbReference type="Gene3D" id="3.40.50.20">
    <property type="match status" value="1"/>
</dbReference>
<dbReference type="Gene3D" id="3.30.1490.20">
    <property type="entry name" value="ATP-grasp fold, A domain"/>
    <property type="match status" value="1"/>
</dbReference>
<dbReference type="Gene3D" id="3.30.470.20">
    <property type="entry name" value="ATP-grasp fold, B domain"/>
    <property type="match status" value="1"/>
</dbReference>
<dbReference type="HAMAP" id="MF_01643">
    <property type="entry name" value="PurT"/>
    <property type="match status" value="1"/>
</dbReference>
<dbReference type="InterPro" id="IPR011761">
    <property type="entry name" value="ATP-grasp"/>
</dbReference>
<dbReference type="InterPro" id="IPR003135">
    <property type="entry name" value="ATP-grasp_carboxylate-amine"/>
</dbReference>
<dbReference type="InterPro" id="IPR013815">
    <property type="entry name" value="ATP_grasp_subdomain_1"/>
</dbReference>
<dbReference type="InterPro" id="IPR016185">
    <property type="entry name" value="PreATP-grasp_dom_sf"/>
</dbReference>
<dbReference type="InterPro" id="IPR005862">
    <property type="entry name" value="PurT"/>
</dbReference>
<dbReference type="InterPro" id="IPR054350">
    <property type="entry name" value="PurT/PurK_preATP-grasp"/>
</dbReference>
<dbReference type="InterPro" id="IPR048740">
    <property type="entry name" value="PurT_C"/>
</dbReference>
<dbReference type="InterPro" id="IPR011054">
    <property type="entry name" value="Rudment_hybrid_motif"/>
</dbReference>
<dbReference type="NCBIfam" id="NF006766">
    <property type="entry name" value="PRK09288.1"/>
    <property type="match status" value="1"/>
</dbReference>
<dbReference type="NCBIfam" id="TIGR01142">
    <property type="entry name" value="purT"/>
    <property type="match status" value="1"/>
</dbReference>
<dbReference type="PANTHER" id="PTHR43055">
    <property type="entry name" value="FORMATE-DEPENDENT PHOSPHORIBOSYLGLYCINAMIDE FORMYLTRANSFERASE"/>
    <property type="match status" value="1"/>
</dbReference>
<dbReference type="PANTHER" id="PTHR43055:SF1">
    <property type="entry name" value="FORMATE-DEPENDENT PHOSPHORIBOSYLGLYCINAMIDE FORMYLTRANSFERASE"/>
    <property type="match status" value="1"/>
</dbReference>
<dbReference type="Pfam" id="PF02222">
    <property type="entry name" value="ATP-grasp"/>
    <property type="match status" value="1"/>
</dbReference>
<dbReference type="Pfam" id="PF21244">
    <property type="entry name" value="PurT_C"/>
    <property type="match status" value="1"/>
</dbReference>
<dbReference type="Pfam" id="PF22660">
    <property type="entry name" value="RS_preATP-grasp-like"/>
    <property type="match status" value="1"/>
</dbReference>
<dbReference type="SUPFAM" id="SSF56059">
    <property type="entry name" value="Glutathione synthetase ATP-binding domain-like"/>
    <property type="match status" value="1"/>
</dbReference>
<dbReference type="SUPFAM" id="SSF52440">
    <property type="entry name" value="PreATP-grasp domain"/>
    <property type="match status" value="1"/>
</dbReference>
<dbReference type="SUPFAM" id="SSF51246">
    <property type="entry name" value="Rudiment single hybrid motif"/>
    <property type="match status" value="1"/>
</dbReference>
<dbReference type="PROSITE" id="PS50975">
    <property type="entry name" value="ATP_GRASP"/>
    <property type="match status" value="1"/>
</dbReference>
<organism>
    <name type="scientific">Shigella boydii serotype 4 (strain Sb227)</name>
    <dbReference type="NCBI Taxonomy" id="300268"/>
    <lineage>
        <taxon>Bacteria</taxon>
        <taxon>Pseudomonadati</taxon>
        <taxon>Pseudomonadota</taxon>
        <taxon>Gammaproteobacteria</taxon>
        <taxon>Enterobacterales</taxon>
        <taxon>Enterobacteriaceae</taxon>
        <taxon>Shigella</taxon>
    </lineage>
</organism>
<evidence type="ECO:0000255" key="1">
    <source>
        <dbReference type="HAMAP-Rule" id="MF_01643"/>
    </source>
</evidence>
<name>PURT_SHIBS</name>
<accession>Q322G6</accession>
<proteinExistence type="inferred from homology"/>
<sequence length="392" mass="42563">MTLLGTALRPAATRVMLLGSGELGKEVAIECQRLGVEVIAVDRYADAPAMHVAHRSHVINMLDGDALRRVVELEKPHYIVPEIEAIATDMLIQLEEERLNVVPCARATKLTMNREGIRRLAAEELQLPTSTYRFADSESLFREAVADIGYPCIVKPVMSSSGKGQTFIRSAEQLAQAWKYAQQGGRAGAGRVIVEGVVKFDFEITLLTVSAVDGVHFCAPVGHRQEDGDYRESWQPQQMSPLALERAQEIARKVVLALGGYGLFGVELFVCSDEVIFSEVSPRPHDTGMVTLISQDLSEFALHVRAFLGLPVGGIRQYGPAASAVILPQLTSQNVTFDNVQNAVGADLQIRLFGKPEIDGSRRLGVALATAESVVDAIERAKHAAGQVKVQG</sequence>
<feature type="chain" id="PRO_0000319238" description="Formate-dependent phosphoribosylglycinamide formyltransferase">
    <location>
        <begin position="1"/>
        <end position="392"/>
    </location>
</feature>
<feature type="domain" description="ATP-grasp" evidence="1">
    <location>
        <begin position="119"/>
        <end position="308"/>
    </location>
</feature>
<feature type="binding site" evidence="1">
    <location>
        <begin position="22"/>
        <end position="23"/>
    </location>
    <ligand>
        <name>N(1)-(5-phospho-beta-D-ribosyl)glycinamide</name>
        <dbReference type="ChEBI" id="CHEBI:143788"/>
    </ligand>
</feature>
<feature type="binding site" evidence="1">
    <location>
        <position position="82"/>
    </location>
    <ligand>
        <name>N(1)-(5-phospho-beta-D-ribosyl)glycinamide</name>
        <dbReference type="ChEBI" id="CHEBI:143788"/>
    </ligand>
</feature>
<feature type="binding site" evidence="1">
    <location>
        <position position="114"/>
    </location>
    <ligand>
        <name>ATP</name>
        <dbReference type="ChEBI" id="CHEBI:30616"/>
    </ligand>
</feature>
<feature type="binding site" evidence="1">
    <location>
        <position position="155"/>
    </location>
    <ligand>
        <name>ATP</name>
        <dbReference type="ChEBI" id="CHEBI:30616"/>
    </ligand>
</feature>
<feature type="binding site" evidence="1">
    <location>
        <begin position="160"/>
        <end position="165"/>
    </location>
    <ligand>
        <name>ATP</name>
        <dbReference type="ChEBI" id="CHEBI:30616"/>
    </ligand>
</feature>
<feature type="binding site" evidence="1">
    <location>
        <begin position="195"/>
        <end position="198"/>
    </location>
    <ligand>
        <name>ATP</name>
        <dbReference type="ChEBI" id="CHEBI:30616"/>
    </ligand>
</feature>
<feature type="binding site" evidence="1">
    <location>
        <position position="203"/>
    </location>
    <ligand>
        <name>ATP</name>
        <dbReference type="ChEBI" id="CHEBI:30616"/>
    </ligand>
</feature>
<feature type="binding site" evidence="1">
    <location>
        <position position="267"/>
    </location>
    <ligand>
        <name>Mg(2+)</name>
        <dbReference type="ChEBI" id="CHEBI:18420"/>
    </ligand>
</feature>
<feature type="binding site" evidence="1">
    <location>
        <position position="279"/>
    </location>
    <ligand>
        <name>Mg(2+)</name>
        <dbReference type="ChEBI" id="CHEBI:18420"/>
    </ligand>
</feature>
<feature type="binding site" evidence="1">
    <location>
        <position position="286"/>
    </location>
    <ligand>
        <name>N(1)-(5-phospho-beta-D-ribosyl)glycinamide</name>
        <dbReference type="ChEBI" id="CHEBI:143788"/>
    </ligand>
</feature>
<feature type="binding site" evidence="1">
    <location>
        <position position="355"/>
    </location>
    <ligand>
        <name>N(1)-(5-phospho-beta-D-ribosyl)glycinamide</name>
        <dbReference type="ChEBI" id="CHEBI:143788"/>
    </ligand>
</feature>
<feature type="binding site" evidence="1">
    <location>
        <begin position="362"/>
        <end position="363"/>
    </location>
    <ligand>
        <name>N(1)-(5-phospho-beta-D-ribosyl)glycinamide</name>
        <dbReference type="ChEBI" id="CHEBI:143788"/>
    </ligand>
</feature>
<comment type="function">
    <text evidence="1">Involved in the de novo purine biosynthesis. Catalyzes the transfer of formate to 5-phospho-ribosyl-glycinamide (GAR), producing 5-phospho-ribosyl-N-formylglycinamide (FGAR). Formate is provided by PurU via hydrolysis of 10-formyl-tetrahydrofolate.</text>
</comment>
<comment type="catalytic activity">
    <reaction evidence="1">
        <text>N(1)-(5-phospho-beta-D-ribosyl)glycinamide + formate + ATP = N(2)-formyl-N(1)-(5-phospho-beta-D-ribosyl)glycinamide + ADP + phosphate + H(+)</text>
        <dbReference type="Rhea" id="RHEA:24829"/>
        <dbReference type="ChEBI" id="CHEBI:15378"/>
        <dbReference type="ChEBI" id="CHEBI:15740"/>
        <dbReference type="ChEBI" id="CHEBI:30616"/>
        <dbReference type="ChEBI" id="CHEBI:43474"/>
        <dbReference type="ChEBI" id="CHEBI:143788"/>
        <dbReference type="ChEBI" id="CHEBI:147286"/>
        <dbReference type="ChEBI" id="CHEBI:456216"/>
        <dbReference type="EC" id="6.3.1.21"/>
    </reaction>
    <physiologicalReaction direction="left-to-right" evidence="1">
        <dbReference type="Rhea" id="RHEA:24830"/>
    </physiologicalReaction>
</comment>
<comment type="pathway">
    <text evidence="1">Purine metabolism; IMP biosynthesis via de novo pathway; N(2)-formyl-N(1)-(5-phospho-D-ribosyl)glycinamide from N(1)-(5-phospho-D-ribosyl)glycinamide (formate route): step 1/1.</text>
</comment>
<comment type="subunit">
    <text evidence="1">Homodimer.</text>
</comment>
<comment type="similarity">
    <text evidence="1">Belongs to the PurK/PurT family.</text>
</comment>
<reference key="1">
    <citation type="journal article" date="2005" name="Nucleic Acids Res.">
        <title>Genome dynamics and diversity of Shigella species, the etiologic agents of bacillary dysentery.</title>
        <authorList>
            <person name="Yang F."/>
            <person name="Yang J."/>
            <person name="Zhang X."/>
            <person name="Chen L."/>
            <person name="Jiang Y."/>
            <person name="Yan Y."/>
            <person name="Tang X."/>
            <person name="Wang J."/>
            <person name="Xiong Z."/>
            <person name="Dong J."/>
            <person name="Xue Y."/>
            <person name="Zhu Y."/>
            <person name="Xu X."/>
            <person name="Sun L."/>
            <person name="Chen S."/>
            <person name="Nie H."/>
            <person name="Peng J."/>
            <person name="Xu J."/>
            <person name="Wang Y."/>
            <person name="Yuan Z."/>
            <person name="Wen Y."/>
            <person name="Yao Z."/>
            <person name="Shen Y."/>
            <person name="Qiang B."/>
            <person name="Hou Y."/>
            <person name="Yu J."/>
            <person name="Jin Q."/>
        </authorList>
    </citation>
    <scope>NUCLEOTIDE SEQUENCE [LARGE SCALE GENOMIC DNA]</scope>
    <source>
        <strain>Sb227</strain>
    </source>
</reference>